<proteinExistence type="inferred from homology"/>
<comment type="function">
    <text evidence="1">Master enzyme that delivers sulfur to a number of partners involved in Fe-S cluster assembly, tRNA modification or cofactor biosynthesis. Catalyzes the removal of elemental sulfur atoms from cysteine to produce alanine. Functions as a sulfur delivery protein for Fe-S cluster synthesis onto IscU, an Fe-S scaffold assembly protein, as well as other S acceptor proteins.</text>
</comment>
<comment type="catalytic activity">
    <reaction evidence="1">
        <text>(sulfur carrier)-H + L-cysteine = (sulfur carrier)-SH + L-alanine</text>
        <dbReference type="Rhea" id="RHEA:43892"/>
        <dbReference type="Rhea" id="RHEA-COMP:14737"/>
        <dbReference type="Rhea" id="RHEA-COMP:14739"/>
        <dbReference type="ChEBI" id="CHEBI:29917"/>
        <dbReference type="ChEBI" id="CHEBI:35235"/>
        <dbReference type="ChEBI" id="CHEBI:57972"/>
        <dbReference type="ChEBI" id="CHEBI:64428"/>
        <dbReference type="EC" id="2.8.1.7"/>
    </reaction>
</comment>
<comment type="cofactor">
    <cofactor evidence="1">
        <name>pyridoxal 5'-phosphate</name>
        <dbReference type="ChEBI" id="CHEBI:597326"/>
    </cofactor>
</comment>
<comment type="pathway">
    <text evidence="1">Cofactor biosynthesis; iron-sulfur cluster biosynthesis.</text>
</comment>
<comment type="subunit">
    <text evidence="1">Homodimer. Forms a heterotetramer with IscU, interacts with other sulfur acceptors.</text>
</comment>
<comment type="subcellular location">
    <subcellularLocation>
        <location evidence="1">Cytoplasm</location>
    </subcellularLocation>
</comment>
<comment type="similarity">
    <text evidence="1">Belongs to the class-V pyridoxal-phosphate-dependent aminotransferase family. NifS/IscS subfamily.</text>
</comment>
<keyword id="KW-0001">2Fe-2S</keyword>
<keyword id="KW-0963">Cytoplasm</keyword>
<keyword id="KW-0408">Iron</keyword>
<keyword id="KW-0411">Iron-sulfur</keyword>
<keyword id="KW-0479">Metal-binding</keyword>
<keyword id="KW-0663">Pyridoxal phosphate</keyword>
<keyword id="KW-1185">Reference proteome</keyword>
<keyword id="KW-0808">Transferase</keyword>
<sequence>MSIPTYMDYSATTPVDERVAQKMIQFLTKDGNFGNSASNSHYYGWQADEAVKKARQQVANLIDADPKEIVWTSGATESNNLAIKGVAHFYHKKGKHIITLKTEHKSVLDTCRQLEREGFEVTYLDPMSNGLLDLNILRDAMREDTILVSIMHVNNEIGVIQDIESIGNLCHQNNIFFHVDAAQSAGKVAISLSELSVDLMSFSAHKIYGPKGMGALYVRRKPRVRIEAQMHGGGHERGMRSGTLATHQIVGMGEAFAIAQAEMREENTKIRQLRDRLLVGFIDMEEVVVNGDMESRIPGNLNISFNYVEGESLMMAINDIAVSSGSACTSLSLEPSYVLRALGLNDELAHSSIRFTIGRYTTEAQIDKAIDLVRAKVDKLRDLSPLWDMFKDGVDISKVEWSAH</sequence>
<name>ISCS_VESOH</name>
<gene>
    <name evidence="1" type="primary">iscS</name>
    <name type="ordered locus">COSY_0532</name>
</gene>
<protein>
    <recommendedName>
        <fullName evidence="1">Cysteine desulfurase IscS</fullName>
        <ecNumber evidence="1">2.8.1.7</ecNumber>
    </recommendedName>
</protein>
<feature type="chain" id="PRO_1000019453" description="Cysteine desulfurase IscS">
    <location>
        <begin position="1"/>
        <end position="404"/>
    </location>
</feature>
<feature type="active site" description="Cysteine persulfide intermediate" evidence="1">
    <location>
        <position position="328"/>
    </location>
</feature>
<feature type="binding site" evidence="1">
    <location>
        <begin position="75"/>
        <end position="76"/>
    </location>
    <ligand>
        <name>pyridoxal 5'-phosphate</name>
        <dbReference type="ChEBI" id="CHEBI:597326"/>
    </ligand>
</feature>
<feature type="binding site" evidence="1">
    <location>
        <position position="155"/>
    </location>
    <ligand>
        <name>pyridoxal 5'-phosphate</name>
        <dbReference type="ChEBI" id="CHEBI:597326"/>
    </ligand>
</feature>
<feature type="binding site" evidence="1">
    <location>
        <position position="183"/>
    </location>
    <ligand>
        <name>pyridoxal 5'-phosphate</name>
        <dbReference type="ChEBI" id="CHEBI:597326"/>
    </ligand>
</feature>
<feature type="binding site" evidence="1">
    <location>
        <begin position="203"/>
        <end position="205"/>
    </location>
    <ligand>
        <name>pyridoxal 5'-phosphate</name>
        <dbReference type="ChEBI" id="CHEBI:597326"/>
    </ligand>
</feature>
<feature type="binding site" evidence="1">
    <location>
        <position position="243"/>
    </location>
    <ligand>
        <name>pyridoxal 5'-phosphate</name>
        <dbReference type="ChEBI" id="CHEBI:597326"/>
    </ligand>
</feature>
<feature type="binding site" description="via persulfide group" evidence="1">
    <location>
        <position position="328"/>
    </location>
    <ligand>
        <name>[2Fe-2S] cluster</name>
        <dbReference type="ChEBI" id="CHEBI:190135"/>
        <note>ligand shared with IscU</note>
    </ligand>
</feature>
<feature type="modified residue" description="N6-(pyridoxal phosphate)lysine" evidence="1">
    <location>
        <position position="206"/>
    </location>
</feature>
<evidence type="ECO:0000255" key="1">
    <source>
        <dbReference type="HAMAP-Rule" id="MF_00331"/>
    </source>
</evidence>
<dbReference type="EC" id="2.8.1.7" evidence="1"/>
<dbReference type="EMBL" id="AP009247">
    <property type="protein sequence ID" value="BAF61650.1"/>
    <property type="molecule type" value="Genomic_DNA"/>
</dbReference>
<dbReference type="RefSeq" id="WP_011929920.1">
    <property type="nucleotide sequence ID" value="NC_009465.1"/>
</dbReference>
<dbReference type="SMR" id="A5CWM6"/>
<dbReference type="STRING" id="412965.COSY_0532"/>
<dbReference type="KEGG" id="vok:COSY_0532"/>
<dbReference type="eggNOG" id="COG1104">
    <property type="taxonomic scope" value="Bacteria"/>
</dbReference>
<dbReference type="HOGENOM" id="CLU_003433_0_2_6"/>
<dbReference type="OrthoDB" id="9808002at2"/>
<dbReference type="UniPathway" id="UPA00266"/>
<dbReference type="Proteomes" id="UP000000247">
    <property type="component" value="Chromosome"/>
</dbReference>
<dbReference type="GO" id="GO:1990221">
    <property type="term" value="C:L-cysteine desulfurase complex"/>
    <property type="evidence" value="ECO:0007669"/>
    <property type="project" value="UniProtKB-ARBA"/>
</dbReference>
<dbReference type="GO" id="GO:0051537">
    <property type="term" value="F:2 iron, 2 sulfur cluster binding"/>
    <property type="evidence" value="ECO:0007669"/>
    <property type="project" value="UniProtKB-UniRule"/>
</dbReference>
<dbReference type="GO" id="GO:0031071">
    <property type="term" value="F:cysteine desulfurase activity"/>
    <property type="evidence" value="ECO:0007669"/>
    <property type="project" value="UniProtKB-UniRule"/>
</dbReference>
<dbReference type="GO" id="GO:0046872">
    <property type="term" value="F:metal ion binding"/>
    <property type="evidence" value="ECO:0007669"/>
    <property type="project" value="UniProtKB-KW"/>
</dbReference>
<dbReference type="GO" id="GO:0030170">
    <property type="term" value="F:pyridoxal phosphate binding"/>
    <property type="evidence" value="ECO:0007669"/>
    <property type="project" value="UniProtKB-UniRule"/>
</dbReference>
<dbReference type="GO" id="GO:0044571">
    <property type="term" value="P:[2Fe-2S] cluster assembly"/>
    <property type="evidence" value="ECO:0007669"/>
    <property type="project" value="UniProtKB-UniRule"/>
</dbReference>
<dbReference type="FunFam" id="3.40.640.10:FF:000003">
    <property type="entry name" value="Cysteine desulfurase IscS"/>
    <property type="match status" value="1"/>
</dbReference>
<dbReference type="FunFam" id="3.90.1150.10:FF:000002">
    <property type="entry name" value="Cysteine desulfurase IscS"/>
    <property type="match status" value="1"/>
</dbReference>
<dbReference type="Gene3D" id="3.90.1150.10">
    <property type="entry name" value="Aspartate Aminotransferase, domain 1"/>
    <property type="match status" value="1"/>
</dbReference>
<dbReference type="Gene3D" id="3.40.640.10">
    <property type="entry name" value="Type I PLP-dependent aspartate aminotransferase-like (Major domain)"/>
    <property type="match status" value="1"/>
</dbReference>
<dbReference type="HAMAP" id="MF_00331">
    <property type="entry name" value="Cys_desulf_IscS"/>
    <property type="match status" value="1"/>
</dbReference>
<dbReference type="InterPro" id="IPR000192">
    <property type="entry name" value="Aminotrans_V_dom"/>
</dbReference>
<dbReference type="InterPro" id="IPR020578">
    <property type="entry name" value="Aminotrans_V_PyrdxlP_BS"/>
</dbReference>
<dbReference type="InterPro" id="IPR010240">
    <property type="entry name" value="Cys_deSase_IscS"/>
</dbReference>
<dbReference type="InterPro" id="IPR016454">
    <property type="entry name" value="Cysteine_dSase"/>
</dbReference>
<dbReference type="InterPro" id="IPR015424">
    <property type="entry name" value="PyrdxlP-dep_Trfase"/>
</dbReference>
<dbReference type="InterPro" id="IPR015421">
    <property type="entry name" value="PyrdxlP-dep_Trfase_major"/>
</dbReference>
<dbReference type="InterPro" id="IPR015422">
    <property type="entry name" value="PyrdxlP-dep_Trfase_small"/>
</dbReference>
<dbReference type="NCBIfam" id="TIGR02006">
    <property type="entry name" value="IscS"/>
    <property type="match status" value="1"/>
</dbReference>
<dbReference type="NCBIfam" id="NF010611">
    <property type="entry name" value="PRK14012.1"/>
    <property type="match status" value="1"/>
</dbReference>
<dbReference type="PANTHER" id="PTHR11601:SF34">
    <property type="entry name" value="CYSTEINE DESULFURASE"/>
    <property type="match status" value="1"/>
</dbReference>
<dbReference type="PANTHER" id="PTHR11601">
    <property type="entry name" value="CYSTEINE DESULFURYLASE FAMILY MEMBER"/>
    <property type="match status" value="1"/>
</dbReference>
<dbReference type="Pfam" id="PF00266">
    <property type="entry name" value="Aminotran_5"/>
    <property type="match status" value="1"/>
</dbReference>
<dbReference type="PIRSF" id="PIRSF005572">
    <property type="entry name" value="NifS"/>
    <property type="match status" value="1"/>
</dbReference>
<dbReference type="SUPFAM" id="SSF53383">
    <property type="entry name" value="PLP-dependent transferases"/>
    <property type="match status" value="1"/>
</dbReference>
<dbReference type="PROSITE" id="PS00595">
    <property type="entry name" value="AA_TRANSFER_CLASS_5"/>
    <property type="match status" value="1"/>
</dbReference>
<accession>A5CWM6</accession>
<organism>
    <name type="scientific">Vesicomyosocius okutanii subsp. Calyptogena okutanii (strain HA)</name>
    <dbReference type="NCBI Taxonomy" id="412965"/>
    <lineage>
        <taxon>Bacteria</taxon>
        <taxon>Pseudomonadati</taxon>
        <taxon>Pseudomonadota</taxon>
        <taxon>Gammaproteobacteria</taxon>
        <taxon>Candidatus Pseudothioglobaceae</taxon>
        <taxon>Candidatus Vesicomyosocius</taxon>
    </lineage>
</organism>
<reference key="1">
    <citation type="journal article" date="2007" name="Curr. Biol.">
        <title>Reduced genome of the thioautotrophic intracellular symbiont in a deep-sea clam, Calyptogena okutanii.</title>
        <authorList>
            <person name="Kuwahara H."/>
            <person name="Yoshida T."/>
            <person name="Takaki Y."/>
            <person name="Shimamura S."/>
            <person name="Nishi S."/>
            <person name="Harada M."/>
            <person name="Matsuyama K."/>
            <person name="Takishita K."/>
            <person name="Kawato M."/>
            <person name="Uematsu K."/>
            <person name="Fujiwara Y."/>
            <person name="Sato T."/>
            <person name="Kato C."/>
            <person name="Kitagawa M."/>
            <person name="Kato I."/>
            <person name="Maruyama T."/>
        </authorList>
    </citation>
    <scope>NUCLEOTIDE SEQUENCE [LARGE SCALE GENOMIC DNA]</scope>
    <source>
        <strain>HA</strain>
    </source>
</reference>